<evidence type="ECO:0000269" key="1">
    <source>
    </source>
</evidence>
<evidence type="ECO:0000269" key="2">
    <source>
    </source>
</evidence>
<evidence type="ECO:0000303" key="3">
    <source>
    </source>
</evidence>
<evidence type="ECO:0000305" key="4"/>
<evidence type="ECO:0000305" key="5">
    <source>
    </source>
</evidence>
<evidence type="ECO:0000312" key="6">
    <source>
        <dbReference type="EMBL" id="ABA41511.1"/>
    </source>
</evidence>
<evidence type="ECO:0000312" key="7">
    <source>
        <dbReference type="EMBL" id="AEY85560.1"/>
    </source>
</evidence>
<keyword id="KW-0045">Antibiotic biosynthesis</keyword>
<keyword id="KW-0464">Manganese</keyword>
<keyword id="KW-0479">Metal-binding</keyword>
<keyword id="KW-0808">Transferase</keyword>
<comment type="function">
    <text evidence="1 2">Involved in the biosynthesis of the antifungal agent validamycin A (PubMed:16632251). Catalyzes the final attachment of glucose from UDP-alpha-D-glucose to validoxylamine A to yield validamycin A (PubMed:16632251, PubMed:18563934). UDP-glucose is the most efficient glycosyl donor, whereas GDP-glucose and ADP-glucose are much less efficient (PubMed:16632251). ValG also utilizes UDP-galactose as substrate to produce the new validamycin analog, 4''-epi-validamycin A (PubMed:18563934).</text>
</comment>
<comment type="catalytic activity">
    <reaction evidence="1 2">
        <text>validoxylamine A + UDP-alpha-D-glucose = validamycin A + UDP + H(+)</text>
        <dbReference type="Rhea" id="RHEA:49388"/>
        <dbReference type="ChEBI" id="CHEBI:15378"/>
        <dbReference type="ChEBI" id="CHEBI:58223"/>
        <dbReference type="ChEBI" id="CHEBI:58885"/>
        <dbReference type="ChEBI" id="CHEBI:90869"/>
        <dbReference type="ChEBI" id="CHEBI:111505"/>
        <dbReference type="EC" id="2.4.1.338"/>
    </reaction>
</comment>
<comment type="cofactor">
    <cofactor evidence="2">
        <name>Mn(2+)</name>
        <dbReference type="ChEBI" id="CHEBI:29035"/>
    </cofactor>
    <text evidence="2">Also able to use Mg(2+), Co(2+) and Ca(2+).</text>
</comment>
<comment type="domain">
    <text evidence="5">Instead of having the common DXD motif at the position 99-101, it contains a DTG sequence, which may provide greater metal ion binding flexibility.</text>
</comment>
<comment type="disruption phenotype">
    <text evidence="1">Cells lacking this gene are unable to produce validamycin A, and show an accumulation of validoxylamine.</text>
</comment>
<comment type="similarity">
    <text evidence="4">Belongs to the glycosyltransferase 2 family.</text>
</comment>
<organism>
    <name type="scientific">Streptomyces hygroscopicus subsp. jinggangensis (strain 5008)</name>
    <dbReference type="NCBI Taxonomy" id="1133850"/>
    <lineage>
        <taxon>Bacteria</taxon>
        <taxon>Bacillati</taxon>
        <taxon>Actinomycetota</taxon>
        <taxon>Actinomycetes</taxon>
        <taxon>Kitasatosporales</taxon>
        <taxon>Streptomycetaceae</taxon>
        <taxon>Streptomyces</taxon>
        <taxon>Streptomyces violaceusniger group</taxon>
    </lineage>
</organism>
<name>VALG_STRHJ</name>
<accession>H2K893</accession>
<accession>Q1L2K4</accession>
<sequence>MPGATSHVPLLSVVIPTYNRAALLDRTLGTLARQTTALEDFEVVVSDDGSTDTTRDVVRSYEDRLRIKYVFQEDLGYRVASARNGGARLASAPLLAFLDTGVLAGPQYVQSVLAAHAGPAPAKVVLGCCYGYDPRNPHPELHSLVEEFPPEEAVRRVGDAPWFQDMRLPEFTAVDFDLSRMHMPWLWFWTLNVSLPAADFWRVGGFDEDFTGWGGEDIELGYRLHAHGIPMTVSRESWGIEAPHERTHEANVSSLMLNCDRFVRKHPSLLPELFWAVTNRGIFGSVETERLRFEEWASQARGQQVLDEIAIGLDTLPPSQHTQRVAVFGSGTEGLPITPRQNVELFLCDYDEGVLARQESRDDAAVSTWHLSGLRTPWPDQHFDLVIITSRMDGPRQAWGEAFTKEAHRIASSVVEPSLRGD</sequence>
<dbReference type="EC" id="2.4.1.338" evidence="1 2"/>
<dbReference type="EMBL" id="DQ164098">
    <property type="protein sequence ID" value="ABA41511.1"/>
    <property type="molecule type" value="Genomic_DNA"/>
</dbReference>
<dbReference type="EMBL" id="CP003275">
    <property type="protein sequence ID" value="AEY85560.1"/>
    <property type="molecule type" value="Genomic_DNA"/>
</dbReference>
<dbReference type="SMR" id="H2K893"/>
<dbReference type="STRING" id="1133850.SHJG_0282"/>
<dbReference type="CAZy" id="GT2">
    <property type="family name" value="Glycosyltransferase Family 2"/>
</dbReference>
<dbReference type="KEGG" id="shy:SHJG_0282"/>
<dbReference type="PATRIC" id="fig|1133850.20.peg.424"/>
<dbReference type="eggNOG" id="COG1216">
    <property type="taxonomic scope" value="Bacteria"/>
</dbReference>
<dbReference type="HOGENOM" id="CLU_025996_24_2_11"/>
<dbReference type="OrthoDB" id="4120491at2"/>
<dbReference type="GO" id="GO:0046872">
    <property type="term" value="F:metal ion binding"/>
    <property type="evidence" value="ECO:0007669"/>
    <property type="project" value="UniProtKB-KW"/>
</dbReference>
<dbReference type="GO" id="GO:0016740">
    <property type="term" value="F:transferase activity"/>
    <property type="evidence" value="ECO:0007669"/>
    <property type="project" value="UniProtKB-KW"/>
</dbReference>
<dbReference type="GO" id="GO:0017000">
    <property type="term" value="P:antibiotic biosynthetic process"/>
    <property type="evidence" value="ECO:0007669"/>
    <property type="project" value="UniProtKB-KW"/>
</dbReference>
<dbReference type="Gene3D" id="3.90.550.10">
    <property type="entry name" value="Spore Coat Polysaccharide Biosynthesis Protein SpsA, Chain A"/>
    <property type="match status" value="1"/>
</dbReference>
<dbReference type="InterPro" id="IPR027791">
    <property type="entry name" value="Galactosyl_T_C"/>
</dbReference>
<dbReference type="InterPro" id="IPR001173">
    <property type="entry name" value="Glyco_trans_2-like"/>
</dbReference>
<dbReference type="InterPro" id="IPR050834">
    <property type="entry name" value="Glycosyltransf_2"/>
</dbReference>
<dbReference type="InterPro" id="IPR029044">
    <property type="entry name" value="Nucleotide-diphossugar_trans"/>
</dbReference>
<dbReference type="PANTHER" id="PTHR43685">
    <property type="entry name" value="GLYCOSYLTRANSFERASE"/>
    <property type="match status" value="1"/>
</dbReference>
<dbReference type="PANTHER" id="PTHR43685:SF3">
    <property type="entry name" value="SLR2126 PROTEIN"/>
    <property type="match status" value="1"/>
</dbReference>
<dbReference type="Pfam" id="PF02709">
    <property type="entry name" value="Glyco_transf_7C"/>
    <property type="match status" value="1"/>
</dbReference>
<dbReference type="Pfam" id="PF00535">
    <property type="entry name" value="Glycos_transf_2"/>
    <property type="match status" value="1"/>
</dbReference>
<dbReference type="SUPFAM" id="SSF53448">
    <property type="entry name" value="Nucleotide-diphospho-sugar transferases"/>
    <property type="match status" value="1"/>
</dbReference>
<feature type="chain" id="PRO_0000442849" description="Validoxylamine A glucosyltransferase">
    <location>
        <begin position="1"/>
        <end position="422"/>
    </location>
</feature>
<feature type="mutagenesis site" description="Alters preferences for metal ion binding (only use Mn(2+) and to some extent Co(2+)), but it does not affect substrate specificity." evidence="2">
    <original>TG</original>
    <variation>CD</variation>
    <location>
        <begin position="100"/>
        <end position="101"/>
    </location>
</feature>
<protein>
    <recommendedName>
        <fullName evidence="3">Validoxylamine A glucosyltransferase</fullName>
        <ecNumber evidence="1 2">2.4.1.338</ecNumber>
    </recommendedName>
</protein>
<gene>
    <name evidence="3" type="primary">valG</name>
    <name evidence="7" type="ordered locus">SHJG_0282</name>
</gene>
<reference key="1">
    <citation type="journal article" date="2006" name="Chem. Biol.">
        <title>Functional analysis of the validamycin biosynthetic gene cluster and engineered production of validoxylamine A.</title>
        <authorList>
            <person name="Bai L."/>
            <person name="Li L."/>
            <person name="Xu H."/>
            <person name="Minagawa K."/>
            <person name="Yu Y."/>
            <person name="Zhang Y."/>
            <person name="Zhou X."/>
            <person name="Floss H.G."/>
            <person name="Mahmud T."/>
            <person name="Deng Z."/>
        </authorList>
    </citation>
    <scope>NUCLEOTIDE SEQUENCE [GENOMIC DNA]</scope>
    <scope>FUNCTION</scope>
    <scope>CATALYTIC ACTIVITY</scope>
    <scope>DISRUPTION PHENOTYPE</scope>
    <scope>SUBSTRATE SPECIFICITY</scope>
    <source>
        <strain evidence="6">5008</strain>
    </source>
</reference>
<reference key="2">
    <citation type="journal article" date="2012" name="BMC Genomics">
        <title>Genomic and transcriptomic insights into the thermo-regulated biosynthesis of validamycin in Streptomyces hygroscopicus 5008.</title>
        <authorList>
            <person name="Wu H."/>
            <person name="Qu S."/>
            <person name="Lu C."/>
            <person name="Zheng H."/>
            <person name="Zhou X."/>
            <person name="Bai L."/>
            <person name="Deng Z."/>
        </authorList>
    </citation>
    <scope>NUCLEOTIDE SEQUENCE [LARGE SCALE GENOMIC DNA]</scope>
    <source>
        <strain>5008</strain>
    </source>
</reference>
<reference key="3">
    <citation type="journal article" date="2008" name="J. Nat. Prod.">
        <title>Catalytic analysis of the validamycin glycosyltransferase (ValG) and enzymatic production of 4''-epi-validamycin A.</title>
        <authorList>
            <person name="Xu H."/>
            <person name="Minagawa K."/>
            <person name="Bai L."/>
            <person name="Deng Z."/>
            <person name="Mahmud T."/>
        </authorList>
    </citation>
    <scope>FUNCTION</scope>
    <scope>CATALYTIC ACTIVITY</scope>
    <scope>COFACTOR</scope>
    <scope>MUTAGENESIS OF 100-THR--GLY-101</scope>
    <scope>DOMAIN</scope>
    <scope>SUBSTRATE SPECIFICITY</scope>
</reference>
<proteinExistence type="evidence at protein level"/>